<evidence type="ECO:0000250" key="1"/>
<evidence type="ECO:0000255" key="2">
    <source>
        <dbReference type="PROSITE-ProRule" id="PRU00508"/>
    </source>
</evidence>
<evidence type="ECO:0000305" key="3"/>
<accession>O60152</accession>
<feature type="chain" id="PRO_0000056134" description="E3 ubiquitin-protein ligase ubr1">
    <location>
        <begin position="1"/>
        <end position="1958"/>
    </location>
</feature>
<feature type="zinc finger region" description="UBR-type" evidence="2">
    <location>
        <begin position="94"/>
        <end position="166"/>
    </location>
</feature>
<feature type="zinc finger region" description="RING-type; atypical">
    <location>
        <begin position="1182"/>
        <end position="1334"/>
    </location>
</feature>
<protein>
    <recommendedName>
        <fullName>E3 ubiquitin-protein ligase ubr1</fullName>
        <ecNumber>2.3.2.27</ecNumber>
    </recommendedName>
    <alternativeName>
        <fullName>N-end-recognizing protein</fullName>
    </alternativeName>
    <alternativeName>
        <fullName>N-recognin-1</fullName>
    </alternativeName>
    <alternativeName>
        <fullName>RING-type E3 ubiquitin transferase ubr1</fullName>
    </alternativeName>
</protein>
<gene>
    <name type="primary">ubr1</name>
    <name type="ORF">SPBC19C7.02</name>
    <name type="ORF">SPBC32F12.14</name>
</gene>
<name>UBR1_SCHPO</name>
<dbReference type="EC" id="2.3.2.27"/>
<dbReference type="EMBL" id="AB079542">
    <property type="protein sequence ID" value="BAB84667.1"/>
    <property type="molecule type" value="Genomic_DNA"/>
</dbReference>
<dbReference type="EMBL" id="CU329671">
    <property type="protein sequence ID" value="CAA19375.2"/>
    <property type="molecule type" value="Genomic_DNA"/>
</dbReference>
<dbReference type="PIR" id="T39808">
    <property type="entry name" value="T39808"/>
</dbReference>
<dbReference type="PIR" id="T40238">
    <property type="entry name" value="T40238"/>
</dbReference>
<dbReference type="RefSeq" id="NP_596158.2">
    <property type="nucleotide sequence ID" value="NM_001022077.3"/>
</dbReference>
<dbReference type="SMR" id="O60152"/>
<dbReference type="BioGRID" id="277284">
    <property type="interactions" value="41"/>
</dbReference>
<dbReference type="FunCoup" id="O60152">
    <property type="interactions" value="370"/>
</dbReference>
<dbReference type="STRING" id="284812.O60152"/>
<dbReference type="iPTMnet" id="O60152"/>
<dbReference type="PaxDb" id="4896-SPBC19C7.02.1"/>
<dbReference type="EnsemblFungi" id="SPBC19C7.02.1">
    <property type="protein sequence ID" value="SPBC19C7.02.1:pep"/>
    <property type="gene ID" value="SPBC19C7.02"/>
</dbReference>
<dbReference type="GeneID" id="2540764"/>
<dbReference type="KEGG" id="spo:2540764"/>
<dbReference type="PomBase" id="SPBC19C7.02">
    <property type="gene designation" value="ubr1"/>
</dbReference>
<dbReference type="VEuPathDB" id="FungiDB:SPBC19C7.02"/>
<dbReference type="eggNOG" id="KOG1140">
    <property type="taxonomic scope" value="Eukaryota"/>
</dbReference>
<dbReference type="HOGENOM" id="CLU_000684_1_0_1"/>
<dbReference type="InParanoid" id="O60152"/>
<dbReference type="OMA" id="EQLPKRM"/>
<dbReference type="PhylomeDB" id="O60152"/>
<dbReference type="Reactome" id="R-SPO-983168">
    <property type="pathway name" value="Antigen processing: Ubiquitination &amp; Proteasome degradation"/>
</dbReference>
<dbReference type="UniPathway" id="UPA00143"/>
<dbReference type="PRO" id="PR:O60152"/>
<dbReference type="Proteomes" id="UP000002485">
    <property type="component" value="Chromosome II"/>
</dbReference>
<dbReference type="GO" id="GO:0005737">
    <property type="term" value="C:cytoplasm"/>
    <property type="evidence" value="ECO:0000318"/>
    <property type="project" value="GO_Central"/>
</dbReference>
<dbReference type="GO" id="GO:0005634">
    <property type="term" value="C:nucleus"/>
    <property type="evidence" value="ECO:0000303"/>
    <property type="project" value="PomBase"/>
</dbReference>
<dbReference type="GO" id="GO:0000151">
    <property type="term" value="C:ubiquitin ligase complex"/>
    <property type="evidence" value="ECO:0000318"/>
    <property type="project" value="GO_Central"/>
</dbReference>
<dbReference type="GO" id="GO:0061630">
    <property type="term" value="F:ubiquitin protein ligase activity"/>
    <property type="evidence" value="ECO:0000315"/>
    <property type="project" value="PomBase"/>
</dbReference>
<dbReference type="GO" id="GO:0008270">
    <property type="term" value="F:zinc ion binding"/>
    <property type="evidence" value="ECO:0000255"/>
    <property type="project" value="PomBase"/>
</dbReference>
<dbReference type="GO" id="GO:2000639">
    <property type="term" value="P:negative regulation of SREBP signaling pathway"/>
    <property type="evidence" value="ECO:0000315"/>
    <property type="project" value="PomBase"/>
</dbReference>
<dbReference type="GO" id="GO:1900735">
    <property type="term" value="P:positive regulation of flocculation"/>
    <property type="evidence" value="ECO:0000316"/>
    <property type="project" value="PomBase"/>
</dbReference>
<dbReference type="GO" id="GO:0043161">
    <property type="term" value="P:proteasome-mediated ubiquitin-dependent protein catabolic process"/>
    <property type="evidence" value="ECO:0000315"/>
    <property type="project" value="PomBase"/>
</dbReference>
<dbReference type="GO" id="GO:0016567">
    <property type="term" value="P:protein ubiquitination"/>
    <property type="evidence" value="ECO:0000318"/>
    <property type="project" value="GO_Central"/>
</dbReference>
<dbReference type="GO" id="GO:0071596">
    <property type="term" value="P:ubiquitin-dependent protein catabolic process via the N-end rule pathway"/>
    <property type="evidence" value="ECO:0000318"/>
    <property type="project" value="GO_Central"/>
</dbReference>
<dbReference type="CDD" id="cd16482">
    <property type="entry name" value="RING-H2_UBR1-like"/>
    <property type="match status" value="1"/>
</dbReference>
<dbReference type="CDD" id="cd19673">
    <property type="entry name" value="UBR-box_UBR3"/>
    <property type="match status" value="1"/>
</dbReference>
<dbReference type="FunFam" id="2.10.110.30:FF:000002">
    <property type="entry name" value="Putative e3 ubiquitin-protein ligase ubr3"/>
    <property type="match status" value="1"/>
</dbReference>
<dbReference type="Gene3D" id="2.10.110.30">
    <property type="match status" value="1"/>
</dbReference>
<dbReference type="Gene3D" id="1.10.10.2670">
    <property type="entry name" value="E3 ubiquitin-protein ligase"/>
    <property type="match status" value="1"/>
</dbReference>
<dbReference type="InterPro" id="IPR042065">
    <property type="entry name" value="E3_ELL-like"/>
</dbReference>
<dbReference type="InterPro" id="IPR044046">
    <property type="entry name" value="E3_ligase_UBR-like_C"/>
</dbReference>
<dbReference type="InterPro" id="IPR039164">
    <property type="entry name" value="UBR1-like"/>
</dbReference>
<dbReference type="InterPro" id="IPR055194">
    <property type="entry name" value="UBR1-like_winged-helix"/>
</dbReference>
<dbReference type="InterPro" id="IPR036390">
    <property type="entry name" value="WH_DNA-bd_sf"/>
</dbReference>
<dbReference type="InterPro" id="IPR003126">
    <property type="entry name" value="Znf_UBR"/>
</dbReference>
<dbReference type="PANTHER" id="PTHR21497:SF24">
    <property type="entry name" value="E3 UBIQUITIN-PROTEIN LIGASE UBR1"/>
    <property type="match status" value="1"/>
</dbReference>
<dbReference type="PANTHER" id="PTHR21497">
    <property type="entry name" value="UBIQUITIN LIGASE E3 ALPHA-RELATED"/>
    <property type="match status" value="1"/>
</dbReference>
<dbReference type="Pfam" id="PF18995">
    <property type="entry name" value="PRT6_C"/>
    <property type="match status" value="1"/>
</dbReference>
<dbReference type="Pfam" id="PF22960">
    <property type="entry name" value="UBR1-like_wing"/>
    <property type="match status" value="1"/>
</dbReference>
<dbReference type="Pfam" id="PF02207">
    <property type="entry name" value="zf-UBR"/>
    <property type="match status" value="1"/>
</dbReference>
<dbReference type="SMART" id="SM00396">
    <property type="entry name" value="ZnF_UBR1"/>
    <property type="match status" value="1"/>
</dbReference>
<dbReference type="SUPFAM" id="SSF46785">
    <property type="entry name" value="Winged helix' DNA-binding domain"/>
    <property type="match status" value="1"/>
</dbReference>
<dbReference type="PROSITE" id="PS51157">
    <property type="entry name" value="ZF_UBR"/>
    <property type="match status" value="1"/>
</dbReference>
<organism>
    <name type="scientific">Schizosaccharomyces pombe (strain 972 / ATCC 24843)</name>
    <name type="common">Fission yeast</name>
    <dbReference type="NCBI Taxonomy" id="284812"/>
    <lineage>
        <taxon>Eukaryota</taxon>
        <taxon>Fungi</taxon>
        <taxon>Dikarya</taxon>
        <taxon>Ascomycota</taxon>
        <taxon>Taphrinomycotina</taxon>
        <taxon>Schizosaccharomycetes</taxon>
        <taxon>Schizosaccharomycetales</taxon>
        <taxon>Schizosaccharomycetaceae</taxon>
        <taxon>Schizosaccharomyces</taxon>
    </lineage>
</organism>
<keyword id="KW-0479">Metal-binding</keyword>
<keyword id="KW-1185">Reference proteome</keyword>
<keyword id="KW-0808">Transferase</keyword>
<keyword id="KW-0833">Ubl conjugation pathway</keyword>
<keyword id="KW-0862">Zinc</keyword>
<keyword id="KW-0863">Zinc-finger</keyword>
<sequence>MLQDESSRSLPRSALIRRRLSLFLQSHALMYSFLWSESAKKSLLNEVFSALLGYDHTLWNTLLPERPTIDASFLLRRAQGHSEGDEYRHGTCESKCGHIFRKGEVFYRCKTCSVDSNSALCVKCFRATSHKDHETSFTVSAGSGGCCDCGNAAAWIGDVSCKIHSHEEDATISNDMIDEIPEKLENSIQTTIDCVLDFVLDVFSCSPENLKKMPTLESILQDEKTSRLSENKYGDIDDSCNMYSLVLWNDEKHSFKQFYEQITTALELPNNVFGKKMANIINDIGRACIVTETNIKELLKIGQKLAQINLAVSIRSMRDIFREESCAVLLEWLADIAGSSICGKRNYFSSVICKELVRPWNCGLHNSDLTFRLSLRSLALPEIVAIDSPDIFLNEDHINSSGPSDTSSHMLETDESSIHSRHWYPSNSLPDVLSYASRVRFDYFFLYDLKLWKSLRYKLQELYLGYFITQPGFKEIMGARIAISYRRLAELFLLLDREPEHSVIFFSMQIFTVADVAKLLVTEYDFLTTINATLYTFFTYKKLNTPNYVDQHAMIRTDSAAFHSRRYIHIFHHIQFMLSIPCVAEIVREDLKFLKQYADFFNLFQGMCPYTRAVSQHVEWENDSWMYVLNVSLQVAKLCRHVGNVFMELNTNKLANAINYLISLILYPKARNESWTNTESLTTGITVDERGNSKLIEYDIALQPVSFHHPLHWLLVYLLSFYVERDNYKLLWTQLDLLAVTDHPLRVCAWLSQMRAKLWIRNGTTLRDQAHHYRNLSFHEYTFDLDVLLLQLTLTYGDPDAILPSFISRFQLEDQMYGRFFVPHKHYDVSQVTIMMEEFLLLLISIVCNTAVLDHWDITRRIEYGIAHILCFRPLPYSEITKRTCEHLLEHKQFESTLKKVATFRNAEGINDSGSFTLKDEYFDYVDPFNIHYSRNQREEAENILRRRYSKQHSKHLESVVYEEYHPILHSNITIPILQSDSFVGILWHTIVYAYIYPYDQGKLEGLVNTALHACLLVLMSEKGSEPIFSKKICENRFPVVEGLQEYCNSPDVTLFSVLCQMKNHRNFVYVKEKISLIMKILKSEVPLLYEPVYAETLSISSSKIVQSLSDAEQQEQHLAKVRMAKERQARIMEQFRMQQNKFLENHALFEASDCEMDEADEFSVTSSVSTKLFLDPPIDTCLLCQEELKDKRPYGTLVFVLRSSVLRLFPADDANYVSEVLDIPDSLDHEIQERPFGLAGKRKKVLDSTEAYDYDNYYYEKKGNELHQLKDSFNGFPPDQLDRGLHATGCGHFMHIDCFKNHIATVTLATRANPYRNHPHNLSMKEFLCPLCKALCNTIFPILWRPKEEINFQEAGVLTAPLKNWLVSKTFSFNKDLNQQLLDIETSPSEHTQSYNLNLLDVLQHTLRDSLKDIYTLNTGADNSSDNVEENADNLFQSSVLDHVHFKSVVNNEVPADERLAISDDIFELYRRLDDVIDLNSSLYSDDFIPVNGKLHNVVKLFSYSLCQVEASTRGHIKCSSIPADIWVHNLGKNQQVFLRILSESIKTYTLLCAHDSQKRIGGSIQEFEFISFCQQKRIFGRLLPSLDSPVTKSITDDRVEPLLVKDTFREFAEASVSGLLSCDESFHYLTQLYYTADIVRNLWILLSQRNSLLKCMESVEFEAFDYEQLKGFEHLVIQIWKSLRVDGAGLINFDCCTEDDLNNPHLLFTLYKLLERFSLIFLRKCALLWYCRYGVSFETQPNLNFQNSELSRLQTKMHIPGVIELSNHLCLTASSTEWSLIKHWCNFFTETGPLCDFPRAYYPGIYELVSLPYELDKVFELLLARRCSKCLTEPMEPAICLFCGKLLCFQSHCCSFNGIGECNLHMQQCASDIGIFLIVKKCAILYLNPPVGSFSVAPFLDAYGETDLGLRRGRSQYLSQKRYDETVRTMWLNGSIPSYIARQLDANPDTGGWETL</sequence>
<proteinExistence type="inferred from homology"/>
<reference key="1">
    <citation type="journal article" date="2001" name="Dev. Cell">
        <title>Phosphorylation of Mei2 and Ste11 by Pat1 kinase inhibits sexual differentiation via ubiquitin proteolysis and 14-3-3 protein in fission yeast.</title>
        <authorList>
            <person name="Kitamura K."/>
            <person name="Katayama S."/>
            <person name="Dhut S."/>
            <person name="Sato M."/>
            <person name="Watanabe Y."/>
            <person name="Yamamoto M."/>
            <person name="Toda T."/>
        </authorList>
    </citation>
    <scope>NUCLEOTIDE SEQUENCE [GENOMIC DNA]</scope>
</reference>
<reference key="2">
    <citation type="journal article" date="2002" name="Nature">
        <title>The genome sequence of Schizosaccharomyces pombe.</title>
        <authorList>
            <person name="Wood V."/>
            <person name="Gwilliam R."/>
            <person name="Rajandream M.A."/>
            <person name="Lyne M.H."/>
            <person name="Lyne R."/>
            <person name="Stewart A."/>
            <person name="Sgouros J.G."/>
            <person name="Peat N."/>
            <person name="Hayles J."/>
            <person name="Baker S.G."/>
            <person name="Basham D."/>
            <person name="Bowman S."/>
            <person name="Brooks K."/>
            <person name="Brown D."/>
            <person name="Brown S."/>
            <person name="Chillingworth T."/>
            <person name="Churcher C.M."/>
            <person name="Collins M."/>
            <person name="Connor R."/>
            <person name="Cronin A."/>
            <person name="Davis P."/>
            <person name="Feltwell T."/>
            <person name="Fraser A."/>
            <person name="Gentles S."/>
            <person name="Goble A."/>
            <person name="Hamlin N."/>
            <person name="Harris D.E."/>
            <person name="Hidalgo J."/>
            <person name="Hodgson G."/>
            <person name="Holroyd S."/>
            <person name="Hornsby T."/>
            <person name="Howarth S."/>
            <person name="Huckle E.J."/>
            <person name="Hunt S."/>
            <person name="Jagels K."/>
            <person name="James K.D."/>
            <person name="Jones L."/>
            <person name="Jones M."/>
            <person name="Leather S."/>
            <person name="McDonald S."/>
            <person name="McLean J."/>
            <person name="Mooney P."/>
            <person name="Moule S."/>
            <person name="Mungall K.L."/>
            <person name="Murphy L.D."/>
            <person name="Niblett D."/>
            <person name="Odell C."/>
            <person name="Oliver K."/>
            <person name="O'Neil S."/>
            <person name="Pearson D."/>
            <person name="Quail M.A."/>
            <person name="Rabbinowitsch E."/>
            <person name="Rutherford K.M."/>
            <person name="Rutter S."/>
            <person name="Saunders D."/>
            <person name="Seeger K."/>
            <person name="Sharp S."/>
            <person name="Skelton J."/>
            <person name="Simmonds M.N."/>
            <person name="Squares R."/>
            <person name="Squares S."/>
            <person name="Stevens K."/>
            <person name="Taylor K."/>
            <person name="Taylor R.G."/>
            <person name="Tivey A."/>
            <person name="Walsh S.V."/>
            <person name="Warren T."/>
            <person name="Whitehead S."/>
            <person name="Woodward J.R."/>
            <person name="Volckaert G."/>
            <person name="Aert R."/>
            <person name="Robben J."/>
            <person name="Grymonprez B."/>
            <person name="Weltjens I."/>
            <person name="Vanstreels E."/>
            <person name="Rieger M."/>
            <person name="Schaefer M."/>
            <person name="Mueller-Auer S."/>
            <person name="Gabel C."/>
            <person name="Fuchs M."/>
            <person name="Duesterhoeft A."/>
            <person name="Fritzc C."/>
            <person name="Holzer E."/>
            <person name="Moestl D."/>
            <person name="Hilbert H."/>
            <person name="Borzym K."/>
            <person name="Langer I."/>
            <person name="Beck A."/>
            <person name="Lehrach H."/>
            <person name="Reinhardt R."/>
            <person name="Pohl T.M."/>
            <person name="Eger P."/>
            <person name="Zimmermann W."/>
            <person name="Wedler H."/>
            <person name="Wambutt R."/>
            <person name="Purnelle B."/>
            <person name="Goffeau A."/>
            <person name="Cadieu E."/>
            <person name="Dreano S."/>
            <person name="Gloux S."/>
            <person name="Lelaure V."/>
            <person name="Mottier S."/>
            <person name="Galibert F."/>
            <person name="Aves S.J."/>
            <person name="Xiang Z."/>
            <person name="Hunt C."/>
            <person name="Moore K."/>
            <person name="Hurst S.M."/>
            <person name="Lucas M."/>
            <person name="Rochet M."/>
            <person name="Gaillardin C."/>
            <person name="Tallada V.A."/>
            <person name="Garzon A."/>
            <person name="Thode G."/>
            <person name="Daga R.R."/>
            <person name="Cruzado L."/>
            <person name="Jimenez J."/>
            <person name="Sanchez M."/>
            <person name="del Rey F."/>
            <person name="Benito J."/>
            <person name="Dominguez A."/>
            <person name="Revuelta J.L."/>
            <person name="Moreno S."/>
            <person name="Armstrong J."/>
            <person name="Forsburg S.L."/>
            <person name="Cerutti L."/>
            <person name="Lowe T."/>
            <person name="McCombie W.R."/>
            <person name="Paulsen I."/>
            <person name="Potashkin J."/>
            <person name="Shpakovski G.V."/>
            <person name="Ussery D."/>
            <person name="Barrell B.G."/>
            <person name="Nurse P."/>
        </authorList>
    </citation>
    <scope>NUCLEOTIDE SEQUENCE [LARGE SCALE GENOMIC DNA]</scope>
    <source>
        <strain>972 / ATCC 24843</strain>
    </source>
</reference>
<comment type="function">
    <text evidence="1">Ubiquitin ligase protein which is a component of the N-end rule pathway. Recognizes and binds to proteins bearing specific N-terminal residues that are destabilizing according to the N-end rule, leading to their ubiquitination and subsequent degradation.</text>
</comment>
<comment type="catalytic activity">
    <reaction>
        <text>S-ubiquitinyl-[E2 ubiquitin-conjugating enzyme]-L-cysteine + [acceptor protein]-L-lysine = [E2 ubiquitin-conjugating enzyme]-L-cysteine + N(6)-ubiquitinyl-[acceptor protein]-L-lysine.</text>
        <dbReference type="EC" id="2.3.2.27"/>
    </reaction>
</comment>
<comment type="pathway">
    <text>Protein modification; protein ubiquitination.</text>
</comment>
<comment type="domain">
    <text>The RING-H2 zinc finger is an atypical RING finger with a His ligand in place of the fourth Cys of the classical motif.</text>
</comment>
<comment type="similarity">
    <text evidence="3">Belongs to the E3 ubiquitin-protein ligase UBR1-like family.</text>
</comment>